<protein>
    <recommendedName>
        <fullName evidence="1">Pyrokinin-5</fullName>
    </recommendedName>
    <alternativeName>
        <fullName evidence="4">DerIn-Capa-PK</fullName>
    </alternativeName>
    <alternativeName>
        <fullName evidence="1">FXPRL-amide</fullName>
    </alternativeName>
</protein>
<keyword id="KW-0027">Amidation</keyword>
<keyword id="KW-0903">Direct protein sequencing</keyword>
<keyword id="KW-0527">Neuropeptide</keyword>
<keyword id="KW-0964">Secreted</keyword>
<name>PPK5_DERIN</name>
<organism>
    <name type="scientific">Deropeltis integerrima</name>
    <name type="common">Cockroach</name>
    <name type="synonym">Deropeltis cf. schweinfurthii (strain SR-2005)</name>
    <dbReference type="NCBI Taxonomy" id="596121"/>
    <lineage>
        <taxon>Eukaryota</taxon>
        <taxon>Metazoa</taxon>
        <taxon>Ecdysozoa</taxon>
        <taxon>Arthropoda</taxon>
        <taxon>Hexapoda</taxon>
        <taxon>Insecta</taxon>
        <taxon>Pterygota</taxon>
        <taxon>Neoptera</taxon>
        <taxon>Polyneoptera</taxon>
        <taxon>Dictyoptera</taxon>
        <taxon>Blattodea</taxon>
        <taxon>Blattoidea</taxon>
        <taxon>Blattidae</taxon>
        <taxon>Blattinae</taxon>
        <taxon>Deropeltis</taxon>
    </lineage>
</organism>
<reference evidence="5" key="1">
    <citation type="journal article" date="2009" name="BMC Evol. Biol.">
        <title>A proteomic approach for studying insect phylogeny: CAPA peptides of ancient insect taxa (Dictyoptera, Blattoptera) as a test case.</title>
        <authorList>
            <person name="Roth S."/>
            <person name="Fromm B."/>
            <person name="Gaede G."/>
            <person name="Predel R."/>
        </authorList>
    </citation>
    <scope>PROTEIN SEQUENCE</scope>
    <scope>AMIDATION AT LEU-17</scope>
    <source>
        <tissue evidence="3">Abdominal perisympathetic organs</tissue>
    </source>
</reference>
<evidence type="ECO:0000250" key="1">
    <source>
        <dbReference type="UniProtKB" id="P82617"/>
    </source>
</evidence>
<evidence type="ECO:0000255" key="2"/>
<evidence type="ECO:0000269" key="3">
    <source>
    </source>
</evidence>
<evidence type="ECO:0000303" key="4">
    <source>
    </source>
</evidence>
<evidence type="ECO:0000305" key="5"/>
<comment type="function">
    <text evidence="1">Myoactive.</text>
</comment>
<comment type="subcellular location">
    <subcellularLocation>
        <location evidence="5">Secreted</location>
    </subcellularLocation>
</comment>
<comment type="similarity">
    <text evidence="2">Belongs to the pyrokinin family.</text>
</comment>
<feature type="peptide" id="PRO_0000378688" description="Pyrokinin-5" evidence="3">
    <location>
        <begin position="1"/>
        <end position="17"/>
    </location>
</feature>
<feature type="modified residue" description="Leucine amide" evidence="3">
    <location>
        <position position="17"/>
    </location>
</feature>
<sequence length="17" mass="1653">GGGGSGETSGMWFGPRL</sequence>
<proteinExistence type="evidence at protein level"/>
<dbReference type="GO" id="GO:0005576">
    <property type="term" value="C:extracellular region"/>
    <property type="evidence" value="ECO:0007669"/>
    <property type="project" value="UniProtKB-SubCell"/>
</dbReference>
<dbReference type="GO" id="GO:0005184">
    <property type="term" value="F:neuropeptide hormone activity"/>
    <property type="evidence" value="ECO:0007669"/>
    <property type="project" value="InterPro"/>
</dbReference>
<dbReference type="GO" id="GO:0007218">
    <property type="term" value="P:neuropeptide signaling pathway"/>
    <property type="evidence" value="ECO:0007669"/>
    <property type="project" value="UniProtKB-KW"/>
</dbReference>
<dbReference type="InterPro" id="IPR001484">
    <property type="entry name" value="Pyrokinin_CS"/>
</dbReference>
<dbReference type="PROSITE" id="PS00539">
    <property type="entry name" value="PYROKININ"/>
    <property type="match status" value="1"/>
</dbReference>
<accession>P85590</accession>